<reference key="1">
    <citation type="journal article" date="1988" name="Biochim. Biophys. Acta">
        <title>Molecular cloning and nucleotide sequence of Thermus thermophilus HB8 trpE and trpG.</title>
        <authorList>
            <person name="Sato S."/>
            <person name="Nakada Y."/>
            <person name="Kanaya S."/>
            <person name="Tanaka T."/>
        </authorList>
    </citation>
    <scope>NUCLEOTIDE SEQUENCE [GENOMIC DNA]</scope>
</reference>
<reference key="2">
    <citation type="submission" date="2004-11" db="EMBL/GenBank/DDBJ databases">
        <title>Complete genome sequence of Thermus thermophilus HB8.</title>
        <authorList>
            <person name="Masui R."/>
            <person name="Kurokawa K."/>
            <person name="Nakagawa N."/>
            <person name="Tokunaga F."/>
            <person name="Koyama Y."/>
            <person name="Shibata T."/>
            <person name="Oshima T."/>
            <person name="Yokoyama S."/>
            <person name="Yasunaga T."/>
            <person name="Kuramitsu S."/>
        </authorList>
    </citation>
    <scope>NUCLEOTIDE SEQUENCE [LARGE SCALE GENOMIC DNA]</scope>
    <source>
        <strain>ATCC 27634 / DSM 579 / HB8</strain>
    </source>
</reference>
<feature type="peptide" id="PRO_0000044030" description="trp operon leader peptide">
    <location>
        <begin position="1"/>
        <end position="11"/>
    </location>
</feature>
<name>LPW_THET8</name>
<gene>
    <name type="primary">trpL</name>
    <name type="ordered locus">TTHA1845</name>
</gene>
<keyword id="KW-0028">Amino-acid biosynthesis</keyword>
<keyword id="KW-0057">Aromatic amino acid biosynthesis</keyword>
<keyword id="KW-0428">Leader peptide</keyword>
<keyword id="KW-1185">Reference proteome</keyword>
<keyword id="KW-0822">Tryptophan biosynthesis</keyword>
<protein>
    <recommendedName>
        <fullName>trp operon leader peptide</fullName>
    </recommendedName>
</protein>
<comment type="function">
    <text>This protein is involved in control of the biosynthesis of tryptophan.</text>
</comment>
<proteinExistence type="predicted"/>
<organism>
    <name type="scientific">Thermus thermophilus (strain ATCC 27634 / DSM 579 / HB8)</name>
    <dbReference type="NCBI Taxonomy" id="300852"/>
    <lineage>
        <taxon>Bacteria</taxon>
        <taxon>Thermotogati</taxon>
        <taxon>Deinococcota</taxon>
        <taxon>Deinococci</taxon>
        <taxon>Thermales</taxon>
        <taxon>Thermaceae</taxon>
        <taxon>Thermus</taxon>
    </lineage>
</organism>
<sequence>MALPSALWWPG</sequence>
<accession>P05624</accession>
<accession>Q5SH85</accession>
<dbReference type="EMBL" id="X07744">
    <property type="protein sequence ID" value="CAA30565.1"/>
    <property type="molecule type" value="Genomic_DNA"/>
</dbReference>
<dbReference type="EMBL" id="AP008226">
    <property type="protein sequence ID" value="BAD71668.1"/>
    <property type="molecule type" value="Genomic_DNA"/>
</dbReference>
<dbReference type="EnsemblBacteria" id="BAD71668">
    <property type="protein sequence ID" value="BAD71668"/>
    <property type="gene ID" value="BAD71668"/>
</dbReference>
<dbReference type="KEGG" id="ttj:TTHA1845"/>
<dbReference type="HOGENOM" id="CLU_3437634_0_0_0"/>
<dbReference type="Proteomes" id="UP000000532">
    <property type="component" value="Chromosome"/>
</dbReference>
<dbReference type="GO" id="GO:0000162">
    <property type="term" value="P:L-tryptophan biosynthetic process"/>
    <property type="evidence" value="ECO:0007669"/>
    <property type="project" value="UniProtKB-KW"/>
</dbReference>